<feature type="initiator methionine" description="Removed">
    <location>
        <position position="1"/>
    </location>
</feature>
<feature type="chain" id="PRO_0000185800" description="Glutathione S-transferase 3">
    <location>
        <begin position="2"/>
        <end position="229"/>
    </location>
</feature>
<feature type="domain" description="GST N-terminal">
    <location>
        <begin position="3"/>
        <end position="83"/>
    </location>
</feature>
<feature type="domain" description="GST C-terminal">
    <location>
        <begin position="85"/>
        <end position="207"/>
    </location>
</feature>
<feature type="binding site" evidence="3 4 5">
    <location>
        <position position="9"/>
    </location>
    <ligand>
        <name>glutathione</name>
        <dbReference type="ChEBI" id="CHEBI:57925"/>
    </ligand>
</feature>
<feature type="binding site" evidence="3 4 5">
    <location>
        <begin position="54"/>
        <end position="55"/>
    </location>
    <ligand>
        <name>glutathione</name>
        <dbReference type="ChEBI" id="CHEBI:57925"/>
    </ligand>
</feature>
<feature type="binding site" evidence="3 4 5">
    <location>
        <begin position="67"/>
        <end position="68"/>
    </location>
    <ligand>
        <name>glutathione</name>
        <dbReference type="ChEBI" id="CHEBI:57925"/>
    </ligand>
</feature>
<feature type="modified residue" description="Blocked amino end (Ala)">
    <location>
        <position position="2"/>
    </location>
</feature>
<feature type="sequence variant">
    <original>L</original>
    <variation>V</variation>
    <location>
        <position position="45"/>
    </location>
</feature>
<feature type="sequence variant">
    <original>S</original>
    <variation>A</variation>
    <location>
        <position position="47"/>
    </location>
</feature>
<feature type="sequence variant">
    <original>I</original>
    <variation>F</variation>
    <location>
        <position position="49"/>
    </location>
</feature>
<feature type="sequence variant">
    <original>I</original>
    <variation>V</variation>
    <location>
        <position position="49"/>
    </location>
</feature>
<feature type="sequence variant">
    <original>F</original>
    <variation>R</variation>
    <location>
        <position position="52"/>
    </location>
</feature>
<feature type="sequence variant">
    <original>TS</original>
    <variation>AN</variation>
    <location>
        <begin position="129"/>
        <end position="130"/>
    </location>
</feature>
<feature type="sequence variant">
    <original>AY</original>
    <variation>VF</variation>
    <location>
        <begin position="135"/>
        <end position="136"/>
    </location>
</feature>
<feature type="sequence variant">
    <original>W</original>
    <variation>R</variation>
    <location>
        <position position="155"/>
    </location>
</feature>
<feature type="sequence variant">
    <original>IH</original>
    <variation>VV</variation>
    <location>
        <begin position="158"/>
        <end position="159"/>
    </location>
</feature>
<feature type="sequence variant">
    <original>A</original>
    <variation>T</variation>
    <location>
        <position position="163"/>
    </location>
</feature>
<feature type="sequence variant">
    <original>M</original>
    <variation>A</variation>
    <location>
        <position position="166"/>
    </location>
</feature>
<feature type="sequence variant">
    <original>E</original>
    <variation>V</variation>
    <location>
        <position position="168"/>
    </location>
</feature>
<feature type="strand" evidence="6">
    <location>
        <begin position="6"/>
        <end position="9"/>
    </location>
</feature>
<feature type="turn" evidence="6">
    <location>
        <begin position="14"/>
        <end position="16"/>
    </location>
</feature>
<feature type="helix" evidence="6">
    <location>
        <begin position="17"/>
        <end position="25"/>
    </location>
</feature>
<feature type="strand" evidence="6">
    <location>
        <begin position="31"/>
        <end position="34"/>
    </location>
</feature>
<feature type="helix" evidence="6">
    <location>
        <begin position="38"/>
        <end position="47"/>
    </location>
</feature>
<feature type="strand" evidence="6">
    <location>
        <begin position="57"/>
        <end position="60"/>
    </location>
</feature>
<feature type="strand" evidence="6">
    <location>
        <begin position="63"/>
        <end position="67"/>
    </location>
</feature>
<feature type="helix" evidence="6">
    <location>
        <begin position="68"/>
        <end position="78"/>
    </location>
</feature>
<feature type="helix" evidence="6">
    <location>
        <begin position="86"/>
        <end position="104"/>
    </location>
</feature>
<feature type="turn" evidence="7">
    <location>
        <begin position="105"/>
        <end position="107"/>
    </location>
</feature>
<feature type="helix" evidence="6">
    <location>
        <begin position="109"/>
        <end position="111"/>
    </location>
</feature>
<feature type="helix" evidence="6">
    <location>
        <begin position="114"/>
        <end position="130"/>
    </location>
</feature>
<feature type="helix" evidence="6">
    <location>
        <begin position="132"/>
        <end position="143"/>
    </location>
</feature>
<feature type="strand" evidence="6">
    <location>
        <begin position="146"/>
        <end position="149"/>
    </location>
</feature>
<feature type="helix" evidence="6">
    <location>
        <begin position="155"/>
        <end position="170"/>
    </location>
</feature>
<feature type="turn" evidence="6">
    <location>
        <begin position="172"/>
        <end position="177"/>
    </location>
</feature>
<feature type="helix" evidence="6">
    <location>
        <begin position="179"/>
        <end position="190"/>
    </location>
</feature>
<feature type="helix" evidence="6">
    <location>
        <begin position="192"/>
        <end position="198"/>
    </location>
</feature>
<feature type="helix" evidence="6">
    <location>
        <begin position="210"/>
        <end position="220"/>
    </location>
</feature>
<organism>
    <name type="scientific">Gallus gallus</name>
    <name type="common">Chicken</name>
    <dbReference type="NCBI Taxonomy" id="9031"/>
    <lineage>
        <taxon>Eukaryota</taxon>
        <taxon>Metazoa</taxon>
        <taxon>Chordata</taxon>
        <taxon>Craniata</taxon>
        <taxon>Vertebrata</taxon>
        <taxon>Euteleostomi</taxon>
        <taxon>Archelosauria</taxon>
        <taxon>Archosauria</taxon>
        <taxon>Dinosauria</taxon>
        <taxon>Saurischia</taxon>
        <taxon>Theropoda</taxon>
        <taxon>Coelurosauria</taxon>
        <taxon>Aves</taxon>
        <taxon>Neognathae</taxon>
        <taxon>Galloanserae</taxon>
        <taxon>Galliformes</taxon>
        <taxon>Phasianidae</taxon>
        <taxon>Phasianinae</taxon>
        <taxon>Gallus</taxon>
    </lineage>
</organism>
<comment type="function">
    <text>Catalyzes the conjugation of GSH to a wide variety of electrophilic alkylating agents. Also involved in the metabolism of lipid hydroperoxides, prostaglandins and leukotriene A4 and in binding of non-substrate hydrophobic ligands such as bile acids, a number of drugs and thyroid hormones. This GST does not exhibit peroxidase activity.</text>
</comment>
<comment type="catalytic activity">
    <reaction evidence="1">
        <text>RX + glutathione = an S-substituted glutathione + a halide anion + H(+)</text>
        <dbReference type="Rhea" id="RHEA:16437"/>
        <dbReference type="ChEBI" id="CHEBI:15378"/>
        <dbReference type="ChEBI" id="CHEBI:16042"/>
        <dbReference type="ChEBI" id="CHEBI:17792"/>
        <dbReference type="ChEBI" id="CHEBI:57925"/>
        <dbReference type="ChEBI" id="CHEBI:90779"/>
        <dbReference type="EC" id="2.5.1.18"/>
    </reaction>
    <physiologicalReaction direction="left-to-right" evidence="1">
        <dbReference type="Rhea" id="RHEA:16438"/>
    </physiologicalReaction>
</comment>
<comment type="subunit">
    <text>Homodimer or heterodimer (with a subunit from group CL-4).</text>
</comment>
<comment type="subcellular location">
    <subcellularLocation>
        <location>Cytoplasm</location>
    </subcellularLocation>
</comment>
<comment type="miscellaneous">
    <text>The variations were found from AA sequencing and imply there are multiple forms of CL-3.</text>
</comment>
<comment type="similarity">
    <text evidence="2">Belongs to the GST superfamily. Alpha family.</text>
</comment>
<name>GSTA3_CHICK</name>
<keyword id="KW-0002">3D-structure</keyword>
<keyword id="KW-0963">Cytoplasm</keyword>
<keyword id="KW-0903">Direct protein sequencing</keyword>
<keyword id="KW-1185">Reference proteome</keyword>
<keyword id="KW-0808">Transferase</keyword>
<dbReference type="EC" id="2.5.1.18"/>
<dbReference type="EMBL" id="M38219">
    <property type="protein sequence ID" value="AAA62731.1"/>
    <property type="molecule type" value="mRNA"/>
</dbReference>
<dbReference type="PIR" id="S19734">
    <property type="entry name" value="S19734"/>
</dbReference>
<dbReference type="RefSeq" id="NP_990743.1">
    <property type="nucleotide sequence ID" value="NM_205412.1"/>
</dbReference>
<dbReference type="RefSeq" id="XP_046769261.1">
    <property type="nucleotide sequence ID" value="XM_046913305.1"/>
</dbReference>
<dbReference type="RefSeq" id="XP_046769262.1">
    <property type="nucleotide sequence ID" value="XM_046913306.1"/>
</dbReference>
<dbReference type="RefSeq" id="XP_046769263.1">
    <property type="nucleotide sequence ID" value="XM_046913307.1"/>
</dbReference>
<dbReference type="RefSeq" id="XP_046769264.1">
    <property type="nucleotide sequence ID" value="XM_046913308.1"/>
</dbReference>
<dbReference type="RefSeq" id="XP_046769265.1">
    <property type="nucleotide sequence ID" value="XM_046913309.1"/>
</dbReference>
<dbReference type="PDB" id="1VF1">
    <property type="method" value="X-ray"/>
    <property type="resolution" value="1.77 A"/>
    <property type="chains" value="A=1-229"/>
</dbReference>
<dbReference type="PDB" id="1VF2">
    <property type="method" value="X-ray"/>
    <property type="resolution" value="2.15 A"/>
    <property type="chains" value="A/B=1-229"/>
</dbReference>
<dbReference type="PDB" id="1VF3">
    <property type="method" value="X-ray"/>
    <property type="resolution" value="2.15 A"/>
    <property type="chains" value="A/B=1-229"/>
</dbReference>
<dbReference type="PDB" id="1VF4">
    <property type="method" value="X-ray"/>
    <property type="resolution" value="2.45 A"/>
    <property type="chains" value="A=1-229"/>
</dbReference>
<dbReference type="PDBsum" id="1VF1"/>
<dbReference type="PDBsum" id="1VF2"/>
<dbReference type="PDBsum" id="1VF3"/>
<dbReference type="PDBsum" id="1VF4"/>
<dbReference type="SMR" id="P26697"/>
<dbReference type="FunCoup" id="P26697">
    <property type="interactions" value="489"/>
</dbReference>
<dbReference type="STRING" id="9031.ENSGALP00000026283"/>
<dbReference type="PaxDb" id="9031-ENSGALP00000026283"/>
<dbReference type="GeneID" id="396380"/>
<dbReference type="KEGG" id="gga:396380"/>
<dbReference type="VEuPathDB" id="HostDB:LOC396380"/>
<dbReference type="eggNOG" id="KOG1695">
    <property type="taxonomic scope" value="Eukaryota"/>
</dbReference>
<dbReference type="InParanoid" id="P26697"/>
<dbReference type="OrthoDB" id="414243at2759"/>
<dbReference type="PhylomeDB" id="P26697"/>
<dbReference type="SABIO-RK" id="P26697"/>
<dbReference type="EvolutionaryTrace" id="P26697"/>
<dbReference type="PRO" id="PR:P26697"/>
<dbReference type="Proteomes" id="UP000000539">
    <property type="component" value="Unassembled WGS sequence"/>
</dbReference>
<dbReference type="GO" id="GO:0005737">
    <property type="term" value="C:cytoplasm"/>
    <property type="evidence" value="ECO:0007669"/>
    <property type="project" value="UniProtKB-SubCell"/>
</dbReference>
<dbReference type="GO" id="GO:0004364">
    <property type="term" value="F:glutathione transferase activity"/>
    <property type="evidence" value="ECO:0000250"/>
    <property type="project" value="UniProtKB"/>
</dbReference>
<dbReference type="GO" id="GO:0006749">
    <property type="term" value="P:glutathione metabolic process"/>
    <property type="evidence" value="ECO:0000250"/>
    <property type="project" value="UniProtKB"/>
</dbReference>
<dbReference type="GO" id="GO:0006805">
    <property type="term" value="P:xenobiotic metabolic process"/>
    <property type="evidence" value="ECO:0000318"/>
    <property type="project" value="GO_Central"/>
</dbReference>
<dbReference type="CDD" id="cd03208">
    <property type="entry name" value="GST_C_Alpha"/>
    <property type="match status" value="1"/>
</dbReference>
<dbReference type="CDD" id="cd03077">
    <property type="entry name" value="GST_N_Alpha"/>
    <property type="match status" value="1"/>
</dbReference>
<dbReference type="FunFam" id="1.20.1050.10:FF:000005">
    <property type="entry name" value="Glutathione S-transferase A1"/>
    <property type="match status" value="1"/>
</dbReference>
<dbReference type="Gene3D" id="1.20.1050.10">
    <property type="match status" value="1"/>
</dbReference>
<dbReference type="Gene3D" id="3.40.30.10">
    <property type="entry name" value="Glutaredoxin"/>
    <property type="match status" value="1"/>
</dbReference>
<dbReference type="InterPro" id="IPR010987">
    <property type="entry name" value="Glutathione-S-Trfase_C-like"/>
</dbReference>
<dbReference type="InterPro" id="IPR036282">
    <property type="entry name" value="Glutathione-S-Trfase_C_sf"/>
</dbReference>
<dbReference type="InterPro" id="IPR004045">
    <property type="entry name" value="Glutathione_S-Trfase_N"/>
</dbReference>
<dbReference type="InterPro" id="IPR003080">
    <property type="entry name" value="GST_alpha"/>
</dbReference>
<dbReference type="InterPro" id="IPR004046">
    <property type="entry name" value="GST_C"/>
</dbReference>
<dbReference type="InterPro" id="IPR050213">
    <property type="entry name" value="GST_superfamily"/>
</dbReference>
<dbReference type="InterPro" id="IPR036249">
    <property type="entry name" value="Thioredoxin-like_sf"/>
</dbReference>
<dbReference type="PANTHER" id="PTHR11571">
    <property type="entry name" value="GLUTATHIONE S-TRANSFERASE"/>
    <property type="match status" value="1"/>
</dbReference>
<dbReference type="PANTHER" id="PTHR11571:SF101">
    <property type="entry name" value="GLUTATHIONE S-TRANSFERASE A4"/>
    <property type="match status" value="1"/>
</dbReference>
<dbReference type="Pfam" id="PF14497">
    <property type="entry name" value="GST_C_3"/>
    <property type="match status" value="1"/>
</dbReference>
<dbReference type="Pfam" id="PF02798">
    <property type="entry name" value="GST_N"/>
    <property type="match status" value="1"/>
</dbReference>
<dbReference type="PRINTS" id="PR01266">
    <property type="entry name" value="GSTRNSFRASEA"/>
</dbReference>
<dbReference type="SFLD" id="SFLDG01205">
    <property type="entry name" value="AMPS.1"/>
    <property type="match status" value="1"/>
</dbReference>
<dbReference type="SFLD" id="SFLDG00363">
    <property type="entry name" value="AMPS_(cytGST):_Alpha-__Mu-__Pi"/>
    <property type="match status" value="1"/>
</dbReference>
<dbReference type="SUPFAM" id="SSF47616">
    <property type="entry name" value="GST C-terminal domain-like"/>
    <property type="match status" value="1"/>
</dbReference>
<dbReference type="SUPFAM" id="SSF52833">
    <property type="entry name" value="Thioredoxin-like"/>
    <property type="match status" value="1"/>
</dbReference>
<dbReference type="PROSITE" id="PS50405">
    <property type="entry name" value="GST_CTER"/>
    <property type="match status" value="1"/>
</dbReference>
<dbReference type="PROSITE" id="PS50404">
    <property type="entry name" value="GST_NTER"/>
    <property type="match status" value="1"/>
</dbReference>
<evidence type="ECO:0000250" key="1">
    <source>
        <dbReference type="UniProtKB" id="Q16772"/>
    </source>
</evidence>
<evidence type="ECO:0000305" key="2"/>
<evidence type="ECO:0007744" key="3">
    <source>
        <dbReference type="PDB" id="1VF1"/>
    </source>
</evidence>
<evidence type="ECO:0007744" key="4">
    <source>
        <dbReference type="PDB" id="1VF2"/>
    </source>
</evidence>
<evidence type="ECO:0007744" key="5">
    <source>
        <dbReference type="PDB" id="1VF3"/>
    </source>
</evidence>
<evidence type="ECO:0007829" key="6">
    <source>
        <dbReference type="PDB" id="1VF1"/>
    </source>
</evidence>
<evidence type="ECO:0007829" key="7">
    <source>
        <dbReference type="PDB" id="1VF3"/>
    </source>
</evidence>
<sequence length="229" mass="26326">MAAKPVLYYFNGRGKMESIRWLLAAAGVEFEEVFLETREQYEKLLQSGILMFQQVPMVEIDGMKLVQTRAILNYIAGKYNLYGKDLKERALIDMYVGGTDDLMGFLLSFPFLSAEDKVKQCAFVVEKATSRYFPAYEKVLKDHGQDFLVGNRLSWADIHLLEAILMVEEKKSDALSGFPLLQAFKKRISSIPTIKKFLAPGSKRKPISDDKYVETVRRVLRMYYDVKPH</sequence>
<accession>P26697</accession>
<protein>
    <recommendedName>
        <fullName>Glutathione S-transferase 3</fullName>
        <ecNumber>2.5.1.18</ecNumber>
    </recommendedName>
    <alternativeName>
        <fullName>GST class-alpha</fullName>
    </alternativeName>
    <alternativeName>
        <fullName>GST-CL3</fullName>
    </alternativeName>
</protein>
<proteinExistence type="evidence at protein level"/>
<reference key="1">
    <citation type="journal article" date="1992" name="Biochem. J.">
        <title>Cloning and expression of a chick liver glutathione S-transferase CL 3 subunit with the use of a baculovirus expression system.</title>
        <authorList>
            <person name="Chang L.-H."/>
            <person name="Fan J.-Y."/>
            <person name="Liu L.-F."/>
            <person name="Tsai S.-P."/>
            <person name="Tam M.F."/>
        </authorList>
    </citation>
    <scope>NUCLEOTIDE SEQUENCE [MRNA]</scope>
    <scope>PARTIAL PROTEIN SEQUENCE</scope>
    <source>
        <strain>White leghorn</strain>
        <tissue>Liver</tissue>
    </source>
</reference>